<keyword id="KW-0131">Cell cycle</keyword>
<keyword id="KW-0132">Cell division</keyword>
<keyword id="KW-0143">Chaperone</keyword>
<keyword id="KW-0963">Cytoplasm</keyword>
<keyword id="KW-0413">Isomerase</keyword>
<keyword id="KW-0697">Rotamase</keyword>
<evidence type="ECO:0000255" key="1">
    <source>
        <dbReference type="HAMAP-Rule" id="MF_00303"/>
    </source>
</evidence>
<evidence type="ECO:0000256" key="2">
    <source>
        <dbReference type="SAM" id="MobiDB-lite"/>
    </source>
</evidence>
<comment type="function">
    <text evidence="1">Involved in protein export. Acts as a chaperone by maintaining the newly synthesized protein in an open conformation. Functions as a peptidyl-prolyl cis-trans isomerase.</text>
</comment>
<comment type="catalytic activity">
    <reaction evidence="1">
        <text>[protein]-peptidylproline (omega=180) = [protein]-peptidylproline (omega=0)</text>
        <dbReference type="Rhea" id="RHEA:16237"/>
        <dbReference type="Rhea" id="RHEA-COMP:10747"/>
        <dbReference type="Rhea" id="RHEA-COMP:10748"/>
        <dbReference type="ChEBI" id="CHEBI:83833"/>
        <dbReference type="ChEBI" id="CHEBI:83834"/>
        <dbReference type="EC" id="5.2.1.8"/>
    </reaction>
</comment>
<comment type="subcellular location">
    <subcellularLocation>
        <location>Cytoplasm</location>
    </subcellularLocation>
    <text evidence="1">About half TF is bound to the ribosome near the polypeptide exit tunnel while the other half is free in the cytoplasm.</text>
</comment>
<comment type="domain">
    <text evidence="1">Consists of 3 domains; the N-terminus binds the ribosome, the middle domain has PPIase activity, while the C-terminus has intrinsic chaperone activity on its own.</text>
</comment>
<comment type="similarity">
    <text evidence="1">Belongs to the FKBP-type PPIase family. Tig subfamily.</text>
</comment>
<reference key="1">
    <citation type="journal article" date="2009" name="Nat. Genet.">
        <title>Comparative genomic and phylogeographic analysis of Mycobacterium leprae.</title>
        <authorList>
            <person name="Monot M."/>
            <person name="Honore N."/>
            <person name="Garnier T."/>
            <person name="Zidane N."/>
            <person name="Sherafi D."/>
            <person name="Paniz-Mondolfi A."/>
            <person name="Matsuoka M."/>
            <person name="Taylor G.M."/>
            <person name="Donoghue H.D."/>
            <person name="Bouwman A."/>
            <person name="Mays S."/>
            <person name="Watson C."/>
            <person name="Lockwood D."/>
            <person name="Khamispour A."/>
            <person name="Dowlati Y."/>
            <person name="Jianping S."/>
            <person name="Rea T.H."/>
            <person name="Vera-Cabrera L."/>
            <person name="Stefani M.M."/>
            <person name="Banu S."/>
            <person name="Macdonald M."/>
            <person name="Sapkota B.R."/>
            <person name="Spencer J.S."/>
            <person name="Thomas J."/>
            <person name="Harshman K."/>
            <person name="Singh P."/>
            <person name="Busso P."/>
            <person name="Gattiker A."/>
            <person name="Rougemont J."/>
            <person name="Brennan P.J."/>
            <person name="Cole S.T."/>
        </authorList>
    </citation>
    <scope>NUCLEOTIDE SEQUENCE [LARGE SCALE GENOMIC DNA]</scope>
    <source>
        <strain>Br4923</strain>
    </source>
</reference>
<feature type="chain" id="PRO_1000198169" description="Trigger factor">
    <location>
        <begin position="1"/>
        <end position="469"/>
    </location>
</feature>
<feature type="domain" description="PPIase FKBP-type" evidence="1">
    <location>
        <begin position="162"/>
        <end position="243"/>
    </location>
</feature>
<feature type="region of interest" description="Disordered" evidence="2">
    <location>
        <begin position="429"/>
        <end position="469"/>
    </location>
</feature>
<feature type="compositionally biased region" description="Basic and acidic residues" evidence="2">
    <location>
        <begin position="437"/>
        <end position="452"/>
    </location>
</feature>
<feature type="compositionally biased region" description="Acidic residues" evidence="2">
    <location>
        <begin position="453"/>
        <end position="469"/>
    </location>
</feature>
<name>TIG_MYCLB</name>
<accession>B8ZRP5</accession>
<dbReference type="EC" id="5.2.1.8" evidence="1"/>
<dbReference type="EMBL" id="FM211192">
    <property type="protein sequence ID" value="CAR71575.1"/>
    <property type="molecule type" value="Genomic_DNA"/>
</dbReference>
<dbReference type="SMR" id="B8ZRP5"/>
<dbReference type="KEGG" id="mlb:MLBr01481"/>
<dbReference type="HOGENOM" id="CLU_033058_3_0_11"/>
<dbReference type="Proteomes" id="UP000006900">
    <property type="component" value="Chromosome"/>
</dbReference>
<dbReference type="GO" id="GO:0005737">
    <property type="term" value="C:cytoplasm"/>
    <property type="evidence" value="ECO:0007669"/>
    <property type="project" value="UniProtKB-SubCell"/>
</dbReference>
<dbReference type="GO" id="GO:0003755">
    <property type="term" value="F:peptidyl-prolyl cis-trans isomerase activity"/>
    <property type="evidence" value="ECO:0007669"/>
    <property type="project" value="UniProtKB-UniRule"/>
</dbReference>
<dbReference type="GO" id="GO:0044183">
    <property type="term" value="F:protein folding chaperone"/>
    <property type="evidence" value="ECO:0007669"/>
    <property type="project" value="TreeGrafter"/>
</dbReference>
<dbReference type="GO" id="GO:0043022">
    <property type="term" value="F:ribosome binding"/>
    <property type="evidence" value="ECO:0007669"/>
    <property type="project" value="TreeGrafter"/>
</dbReference>
<dbReference type="GO" id="GO:0051083">
    <property type="term" value="P:'de novo' cotranslational protein folding"/>
    <property type="evidence" value="ECO:0007669"/>
    <property type="project" value="TreeGrafter"/>
</dbReference>
<dbReference type="GO" id="GO:0051301">
    <property type="term" value="P:cell division"/>
    <property type="evidence" value="ECO:0007669"/>
    <property type="project" value="UniProtKB-KW"/>
</dbReference>
<dbReference type="GO" id="GO:0061077">
    <property type="term" value="P:chaperone-mediated protein folding"/>
    <property type="evidence" value="ECO:0007669"/>
    <property type="project" value="TreeGrafter"/>
</dbReference>
<dbReference type="GO" id="GO:0015031">
    <property type="term" value="P:protein transport"/>
    <property type="evidence" value="ECO:0007669"/>
    <property type="project" value="UniProtKB-UniRule"/>
</dbReference>
<dbReference type="GO" id="GO:0043335">
    <property type="term" value="P:protein unfolding"/>
    <property type="evidence" value="ECO:0007669"/>
    <property type="project" value="TreeGrafter"/>
</dbReference>
<dbReference type="Gene3D" id="3.10.50.40">
    <property type="match status" value="1"/>
</dbReference>
<dbReference type="Gene3D" id="3.30.70.1050">
    <property type="entry name" value="Trigger factor ribosome-binding domain"/>
    <property type="match status" value="1"/>
</dbReference>
<dbReference type="Gene3D" id="1.10.3120.10">
    <property type="entry name" value="Trigger factor, C-terminal domain"/>
    <property type="match status" value="1"/>
</dbReference>
<dbReference type="HAMAP" id="MF_00303">
    <property type="entry name" value="Trigger_factor_Tig"/>
    <property type="match status" value="1"/>
</dbReference>
<dbReference type="InterPro" id="IPR046357">
    <property type="entry name" value="PPIase_dom_sf"/>
</dbReference>
<dbReference type="InterPro" id="IPR001179">
    <property type="entry name" value="PPIase_FKBP_dom"/>
</dbReference>
<dbReference type="InterPro" id="IPR005215">
    <property type="entry name" value="Trig_fac"/>
</dbReference>
<dbReference type="InterPro" id="IPR008880">
    <property type="entry name" value="Trigger_fac_C"/>
</dbReference>
<dbReference type="InterPro" id="IPR037041">
    <property type="entry name" value="Trigger_fac_C_sf"/>
</dbReference>
<dbReference type="InterPro" id="IPR008881">
    <property type="entry name" value="Trigger_fac_ribosome-bd_bac"/>
</dbReference>
<dbReference type="InterPro" id="IPR036611">
    <property type="entry name" value="Trigger_fac_ribosome-bd_sf"/>
</dbReference>
<dbReference type="InterPro" id="IPR027304">
    <property type="entry name" value="Trigger_fact/SurA_dom_sf"/>
</dbReference>
<dbReference type="NCBIfam" id="TIGR00115">
    <property type="entry name" value="tig"/>
    <property type="match status" value="1"/>
</dbReference>
<dbReference type="PANTHER" id="PTHR30560">
    <property type="entry name" value="TRIGGER FACTOR CHAPERONE AND PEPTIDYL-PROLYL CIS/TRANS ISOMERASE"/>
    <property type="match status" value="1"/>
</dbReference>
<dbReference type="PANTHER" id="PTHR30560:SF3">
    <property type="entry name" value="TRIGGER FACTOR-LIKE PROTEIN TIG, CHLOROPLASTIC"/>
    <property type="match status" value="1"/>
</dbReference>
<dbReference type="Pfam" id="PF00254">
    <property type="entry name" value="FKBP_C"/>
    <property type="match status" value="1"/>
</dbReference>
<dbReference type="Pfam" id="PF05698">
    <property type="entry name" value="Trigger_C"/>
    <property type="match status" value="1"/>
</dbReference>
<dbReference type="Pfam" id="PF05697">
    <property type="entry name" value="Trigger_N"/>
    <property type="match status" value="1"/>
</dbReference>
<dbReference type="PIRSF" id="PIRSF003095">
    <property type="entry name" value="Trigger_factor"/>
    <property type="match status" value="1"/>
</dbReference>
<dbReference type="SUPFAM" id="SSF54534">
    <property type="entry name" value="FKBP-like"/>
    <property type="match status" value="1"/>
</dbReference>
<dbReference type="SUPFAM" id="SSF109998">
    <property type="entry name" value="Triger factor/SurA peptide-binding domain-like"/>
    <property type="match status" value="1"/>
</dbReference>
<dbReference type="SUPFAM" id="SSF102735">
    <property type="entry name" value="Trigger factor ribosome-binding domain"/>
    <property type="match status" value="1"/>
</dbReference>
<dbReference type="PROSITE" id="PS50059">
    <property type="entry name" value="FKBP_PPIASE"/>
    <property type="match status" value="1"/>
</dbReference>
<protein>
    <recommendedName>
        <fullName evidence="1">Trigger factor</fullName>
        <shortName evidence="1">TF</shortName>
        <ecNumber evidence="1">5.2.1.8</ecNumber>
    </recommendedName>
    <alternativeName>
        <fullName evidence="1">PPIase</fullName>
    </alternativeName>
</protein>
<organism>
    <name type="scientific">Mycobacterium leprae (strain Br4923)</name>
    <dbReference type="NCBI Taxonomy" id="561304"/>
    <lineage>
        <taxon>Bacteria</taxon>
        <taxon>Bacillati</taxon>
        <taxon>Actinomycetota</taxon>
        <taxon>Actinomycetes</taxon>
        <taxon>Mycobacteriales</taxon>
        <taxon>Mycobacteriaceae</taxon>
        <taxon>Mycobacterium</taxon>
    </lineage>
</organism>
<proteinExistence type="inferred from homology"/>
<sequence length="469" mass="51476">MKSSVEQLNPTRVRINVEVPFTELEPDFQRAYKELARHVQLPGFRPGKVPARLLEARFGRETLLDQVVNEAMPSRYGQALAESEVQPIGQPEIEVIRKEYGQDLAFTVEVEVRPKIALPDFSTLKVVVDPVEVSTDDVEAELRSLRARFGTLIGVDRPVALGDFVSIDLSATINGEKVPNADAEGLSHEVGYGRLIAGLDDALVGLSAGESRVFTTQLATSKHAGQDAEVIVTVKSVKERELPEPDDEFAQLVSEFDTMAELRANLGDQVRKAKYAQQAEKIRDAAVDALLERVDVPLPEGIVQAQFNNALHDALSGLGHDEAKFAEVLAERGSSREEFEAEARSAAERDVTRQLLLDVVADDQKIQVGQDDLNERLLATSQQYGVDAQQLFGFLRENNRLSSLVTDARRRLAVAAVVEAATFTDSDGNTIDTSEFFGKHAQSDKADQKTEEADPNSDAIDEEVDEAAE</sequence>
<gene>
    <name evidence="1" type="primary">tig</name>
    <name type="ordered locus">MLBr01481</name>
</gene>